<accession>Q5FWM1</accession>
<comment type="function">
    <text evidence="1">Specifically acetylates 'Lys-40' in alpha-tubulin on the lumenal side of microtubules. Promotes microtubule destabilization and accelerates microtubule dynamics; this activity may be independent of acetylation activity. Acetylates alpha-tubulin with a slow enzymatic rate, due to a catalytic site that is not optimized for acetyl transfer. Enters the microtubule through each end and diffuses quickly throughout the lumen of microtubules. Acetylates only long/old microtubules because of its slow acetylation rate since it does not have time to act on dynamically unstable microtubules before the enzyme is released. May be involved in neuron development.</text>
</comment>
<comment type="catalytic activity">
    <reaction evidence="1">
        <text>L-lysyl-[alpha-tubulin] + acetyl-CoA = N(6)-acetyl-L-lysyl-[alpha-tubulin] + CoA + H(+)</text>
        <dbReference type="Rhea" id="RHEA:15277"/>
        <dbReference type="Rhea" id="RHEA-COMP:11278"/>
        <dbReference type="Rhea" id="RHEA-COMP:11279"/>
        <dbReference type="ChEBI" id="CHEBI:15378"/>
        <dbReference type="ChEBI" id="CHEBI:29969"/>
        <dbReference type="ChEBI" id="CHEBI:57287"/>
        <dbReference type="ChEBI" id="CHEBI:57288"/>
        <dbReference type="ChEBI" id="CHEBI:61930"/>
        <dbReference type="EC" id="2.3.1.108"/>
    </reaction>
</comment>
<comment type="subcellular location">
    <subcellularLocation>
        <location evidence="1">Cytoplasm</location>
    </subcellularLocation>
    <subcellularLocation>
        <location evidence="1">Membrane</location>
        <location evidence="1">Clathrin-coated pit</location>
    </subcellularLocation>
    <subcellularLocation>
        <location evidence="1">Cell junction</location>
        <location evidence="1">Focal adhesion</location>
    </subcellularLocation>
    <subcellularLocation>
        <location evidence="1">Cell projection</location>
        <location evidence="1">Axon</location>
    </subcellularLocation>
    <subcellularLocation>
        <location evidence="1">Cytoplasm</location>
        <location evidence="1">Cytoskeleton</location>
    </subcellularLocation>
    <subcellularLocation>
        <location evidence="1">Cytoplasm</location>
        <location evidence="1">Cytoskeleton</location>
        <location evidence="1">Spindle</location>
    </subcellularLocation>
</comment>
<comment type="similarity">
    <text evidence="1">Belongs to the acetyltransferase ATAT1 family.</text>
</comment>
<dbReference type="EC" id="2.3.1.108" evidence="1"/>
<dbReference type="EMBL" id="BC089285">
    <property type="protein sequence ID" value="AAH89285.1"/>
    <property type="molecule type" value="mRNA"/>
</dbReference>
<dbReference type="RefSeq" id="NP_001089986.1">
    <property type="nucleotide sequence ID" value="NM_001096517.1"/>
</dbReference>
<dbReference type="SMR" id="Q5FWM1"/>
<dbReference type="DNASU" id="735057"/>
<dbReference type="GeneID" id="735057"/>
<dbReference type="KEGG" id="xla:735057"/>
<dbReference type="AGR" id="Xenbase:XB-GENE-865161"/>
<dbReference type="CTD" id="735057"/>
<dbReference type="Xenbase" id="XB-GENE-865161">
    <property type="gene designation" value="atat1.S"/>
</dbReference>
<dbReference type="OrthoDB" id="447510at2759"/>
<dbReference type="Proteomes" id="UP000186698">
    <property type="component" value="Chromosome 8S"/>
</dbReference>
<dbReference type="Bgee" id="735057">
    <property type="expression patterns" value="Expressed in egg cell and 19 other cell types or tissues"/>
</dbReference>
<dbReference type="GO" id="GO:0030424">
    <property type="term" value="C:axon"/>
    <property type="evidence" value="ECO:0007669"/>
    <property type="project" value="UniProtKB-SubCell"/>
</dbReference>
<dbReference type="GO" id="GO:0005905">
    <property type="term" value="C:clathrin-coated pit"/>
    <property type="evidence" value="ECO:0007669"/>
    <property type="project" value="UniProtKB-SubCell"/>
</dbReference>
<dbReference type="GO" id="GO:0005737">
    <property type="term" value="C:cytoplasm"/>
    <property type="evidence" value="ECO:0007669"/>
    <property type="project" value="UniProtKB-SubCell"/>
</dbReference>
<dbReference type="GO" id="GO:0005925">
    <property type="term" value="C:focal adhesion"/>
    <property type="evidence" value="ECO:0007669"/>
    <property type="project" value="UniProtKB-SubCell"/>
</dbReference>
<dbReference type="GO" id="GO:0005874">
    <property type="term" value="C:microtubule"/>
    <property type="evidence" value="ECO:0007669"/>
    <property type="project" value="InterPro"/>
</dbReference>
<dbReference type="GO" id="GO:0005819">
    <property type="term" value="C:spindle"/>
    <property type="evidence" value="ECO:0007669"/>
    <property type="project" value="UniProtKB-SubCell"/>
</dbReference>
<dbReference type="GO" id="GO:0004468">
    <property type="term" value="F:L-lysine N-acetyltransferase activity, acting on acetyl phosphate as donor"/>
    <property type="evidence" value="ECO:0000250"/>
    <property type="project" value="UniProtKB"/>
</dbReference>
<dbReference type="GO" id="GO:0019799">
    <property type="term" value="F:tubulin N-acetyltransferase activity"/>
    <property type="evidence" value="ECO:0000250"/>
    <property type="project" value="UniProtKB"/>
</dbReference>
<dbReference type="GO" id="GO:0071929">
    <property type="term" value="P:alpha-tubulin acetylation"/>
    <property type="evidence" value="ECO:0000250"/>
    <property type="project" value="UniProtKB"/>
</dbReference>
<dbReference type="GO" id="GO:0000226">
    <property type="term" value="P:microtubule cytoskeleton organization"/>
    <property type="evidence" value="ECO:0000318"/>
    <property type="project" value="GO_Central"/>
</dbReference>
<dbReference type="GO" id="GO:0048666">
    <property type="term" value="P:neuron development"/>
    <property type="evidence" value="ECO:0007669"/>
    <property type="project" value="UniProtKB-UniRule"/>
</dbReference>
<dbReference type="GO" id="GO:0070507">
    <property type="term" value="P:regulation of microtubule cytoskeleton organization"/>
    <property type="evidence" value="ECO:0007669"/>
    <property type="project" value="UniProtKB-UniRule"/>
</dbReference>
<dbReference type="FunFam" id="3.40.630.30:FF:000060">
    <property type="entry name" value="Alpha-tubulin N-acetyltransferase 1"/>
    <property type="match status" value="1"/>
</dbReference>
<dbReference type="Gene3D" id="3.40.630.30">
    <property type="match status" value="1"/>
</dbReference>
<dbReference type="Gene3D" id="6.20.370.120">
    <property type="match status" value="1"/>
</dbReference>
<dbReference type="HAMAP" id="MF_03130">
    <property type="entry name" value="mec17"/>
    <property type="match status" value="1"/>
</dbReference>
<dbReference type="InterPro" id="IPR038746">
    <property type="entry name" value="Atat"/>
</dbReference>
<dbReference type="InterPro" id="IPR007965">
    <property type="entry name" value="GNAT_ATAT"/>
</dbReference>
<dbReference type="PANTHER" id="PTHR12327">
    <property type="entry name" value="ALPHA-TUBULIN N-ACETYLTRANSFERASE 1"/>
    <property type="match status" value="1"/>
</dbReference>
<dbReference type="PANTHER" id="PTHR12327:SF0">
    <property type="entry name" value="ALPHA-TUBULIN N-ACETYLTRANSFERASE 1"/>
    <property type="match status" value="1"/>
</dbReference>
<dbReference type="Pfam" id="PF05301">
    <property type="entry name" value="Acetyltransf_16"/>
    <property type="match status" value="1"/>
</dbReference>
<dbReference type="PROSITE" id="PS51730">
    <property type="entry name" value="GNAT_ATAT"/>
    <property type="match status" value="1"/>
</dbReference>
<reference key="1">
    <citation type="submission" date="2005-01" db="EMBL/GenBank/DDBJ databases">
        <authorList>
            <consortium name="NIH - Xenopus Gene Collection (XGC) project"/>
        </authorList>
    </citation>
    <scope>NUCLEOTIDE SEQUENCE [LARGE SCALE MRNA]</scope>
    <source>
        <tissue>Egg</tissue>
    </source>
</reference>
<name>ATAT_XENLA</name>
<organism>
    <name type="scientific">Xenopus laevis</name>
    <name type="common">African clawed frog</name>
    <dbReference type="NCBI Taxonomy" id="8355"/>
    <lineage>
        <taxon>Eukaryota</taxon>
        <taxon>Metazoa</taxon>
        <taxon>Chordata</taxon>
        <taxon>Craniata</taxon>
        <taxon>Vertebrata</taxon>
        <taxon>Euteleostomi</taxon>
        <taxon>Amphibia</taxon>
        <taxon>Batrachia</taxon>
        <taxon>Anura</taxon>
        <taxon>Pipoidea</taxon>
        <taxon>Pipidae</taxon>
        <taxon>Xenopodinae</taxon>
        <taxon>Xenopus</taxon>
        <taxon>Xenopus</taxon>
    </lineage>
</organism>
<feature type="chain" id="PRO_0000402068" description="Alpha-tubulin N-acetyltransferase 1">
    <location>
        <begin position="1"/>
        <end position="418"/>
    </location>
</feature>
<feature type="domain" description="N-acetyltransferase" evidence="1">
    <location>
        <begin position="1"/>
        <end position="186"/>
    </location>
</feature>
<feature type="region of interest" description="Disordered" evidence="2">
    <location>
        <begin position="237"/>
        <end position="292"/>
    </location>
</feature>
<feature type="region of interest" description="Disordered" evidence="2">
    <location>
        <begin position="322"/>
        <end position="353"/>
    </location>
</feature>
<feature type="compositionally biased region" description="Basic and acidic residues" evidence="2">
    <location>
        <begin position="277"/>
        <end position="287"/>
    </location>
</feature>
<feature type="compositionally biased region" description="Polar residues" evidence="2">
    <location>
        <begin position="329"/>
        <end position="353"/>
    </location>
</feature>
<feature type="binding site" evidence="1">
    <location>
        <begin position="120"/>
        <end position="133"/>
    </location>
    <ligand>
        <name>acetyl-CoA</name>
        <dbReference type="ChEBI" id="CHEBI:57288"/>
    </ligand>
</feature>
<feature type="binding site" evidence="1">
    <location>
        <begin position="156"/>
        <end position="165"/>
    </location>
    <ligand>
        <name>acetyl-CoA</name>
        <dbReference type="ChEBI" id="CHEBI:57288"/>
    </ligand>
</feature>
<feature type="site" description="Crucial for catalytic activity" evidence="1">
    <location>
        <position position="54"/>
    </location>
</feature>
<keyword id="KW-0012">Acyltransferase</keyword>
<keyword id="KW-0965">Cell junction</keyword>
<keyword id="KW-0966">Cell projection</keyword>
<keyword id="KW-0168">Coated pit</keyword>
<keyword id="KW-0963">Cytoplasm</keyword>
<keyword id="KW-0206">Cytoskeleton</keyword>
<keyword id="KW-0472">Membrane</keyword>
<keyword id="KW-1185">Reference proteome</keyword>
<keyword id="KW-0808">Transferase</keyword>
<evidence type="ECO:0000255" key="1">
    <source>
        <dbReference type="HAMAP-Rule" id="MF_03130"/>
    </source>
</evidence>
<evidence type="ECO:0000256" key="2">
    <source>
        <dbReference type="SAM" id="MobiDB-lite"/>
    </source>
</evidence>
<protein>
    <recommendedName>
        <fullName evidence="1">Alpha-tubulin N-acetyltransferase 1</fullName>
        <shortName evidence="1">Alpha-TAT</shortName>
        <shortName evidence="1">Alpha-TAT1</shortName>
        <shortName evidence="1">TAT</shortName>
        <ecNumber evidence="1">2.3.1.108</ecNumber>
    </recommendedName>
    <alternativeName>
        <fullName evidence="1">Acetyltransferase mec-17 homolog</fullName>
    </alternativeName>
</protein>
<sequence>MEFEFDVHKIFLEPITKLDNNLIPPRRPLISSSEAQKQIMTVIDEIGKASAKAQRLPASITSASRMQANKHHLYILKDCTPKTAGRGAVIGFLKVGYKKLFILDQKGSHIEAEPLCILDFYIHESLQRHGFGKELFSFMLRNEQVDVQHLAIDRPSEKFLSFLRKHFNLWSTIPQVNNFVVFEGFFRDRKASVKKTPAKRTEGEIKPYSLTDRDFLKQEEGLPWPLSQAQINLNRASSLGSSPTRACSRPPPGEEDFVKSLRNCRPHSLQRAASSEQEDHSQRRRTSEMNLSRGLLAQKNGYSRYLSPPPPLLTQGPYAAAQIKEQQSRTDSSAQEGRTQDRPNGSNSQHQNDLISSKQHVQDLHMELAAGRTMSDLKEGQNATKSPWCDHPSYTVLGTVLNAAWVKKKQELRSTRPW</sequence>
<gene>
    <name evidence="1" type="primary">atat1</name>
    <name type="synonym">mec17</name>
</gene>
<proteinExistence type="evidence at transcript level"/>